<keyword id="KW-0963">Cytoplasm</keyword>
<keyword id="KW-0378">Hydrolase</keyword>
<keyword id="KW-0479">Metal-binding</keyword>
<keyword id="KW-0547">Nucleotide-binding</keyword>
<feature type="chain" id="PRO_1000071159" description="5'-nucleotidase SurE">
    <location>
        <begin position="1"/>
        <end position="258"/>
    </location>
</feature>
<feature type="binding site" evidence="1">
    <location>
        <position position="9"/>
    </location>
    <ligand>
        <name>a divalent metal cation</name>
        <dbReference type="ChEBI" id="CHEBI:60240"/>
    </ligand>
</feature>
<feature type="binding site" evidence="1">
    <location>
        <position position="10"/>
    </location>
    <ligand>
        <name>a divalent metal cation</name>
        <dbReference type="ChEBI" id="CHEBI:60240"/>
    </ligand>
</feature>
<feature type="binding site" evidence="1">
    <location>
        <position position="42"/>
    </location>
    <ligand>
        <name>a divalent metal cation</name>
        <dbReference type="ChEBI" id="CHEBI:60240"/>
    </ligand>
</feature>
<feature type="binding site" evidence="1">
    <location>
        <position position="96"/>
    </location>
    <ligand>
        <name>a divalent metal cation</name>
        <dbReference type="ChEBI" id="CHEBI:60240"/>
    </ligand>
</feature>
<name>SURE_CAMJ8</name>
<protein>
    <recommendedName>
        <fullName evidence="1">5'-nucleotidase SurE</fullName>
        <ecNumber evidence="1">3.1.3.5</ecNumber>
    </recommendedName>
    <alternativeName>
        <fullName evidence="1">Nucleoside 5'-monophosphate phosphohydrolase</fullName>
    </alternativeName>
</protein>
<accession>A8FK82</accession>
<reference key="1">
    <citation type="journal article" date="2007" name="J. Bacteriol.">
        <title>The complete genome sequence of Campylobacter jejuni strain 81116 (NCTC11828).</title>
        <authorList>
            <person name="Pearson B.M."/>
            <person name="Gaskin D.J.H."/>
            <person name="Segers R.P.A.M."/>
            <person name="Wells J.M."/>
            <person name="Nuijten P.J.M."/>
            <person name="van Vliet A.H.M."/>
        </authorList>
    </citation>
    <scope>NUCLEOTIDE SEQUENCE [LARGE SCALE GENOMIC DNA]</scope>
    <source>
        <strain>81116 / NCTC 11828</strain>
    </source>
</reference>
<sequence>MKEILITNDDGYESEGLKKLIKMLTKEFKAKITIVAPASEKSACSHSITLTKPLRFVKVGKRFYKLDDGTPADCVYLALHALYKKRLPDLVISGINKGANVGEDITYSGTCAGAMEAVLQGIPAIALSQFYKKSEKELDYKNALQITKKIIQNIFDKGFPLEKKEFLNINFPAKSKIKGIKICKAGKRVYNFEAHSNVNPRGVEYYWLAAANLDFEDEKNSDIALLKKGYATITPIMLDLTAYEKMKKVKKWLKANDE</sequence>
<organism>
    <name type="scientific">Campylobacter jejuni subsp. jejuni serotype O:6 (strain 81116 / NCTC 11828)</name>
    <dbReference type="NCBI Taxonomy" id="407148"/>
    <lineage>
        <taxon>Bacteria</taxon>
        <taxon>Pseudomonadati</taxon>
        <taxon>Campylobacterota</taxon>
        <taxon>Epsilonproteobacteria</taxon>
        <taxon>Campylobacterales</taxon>
        <taxon>Campylobacteraceae</taxon>
        <taxon>Campylobacter</taxon>
    </lineage>
</organism>
<proteinExistence type="inferred from homology"/>
<evidence type="ECO:0000255" key="1">
    <source>
        <dbReference type="HAMAP-Rule" id="MF_00060"/>
    </source>
</evidence>
<dbReference type="EC" id="3.1.3.5" evidence="1"/>
<dbReference type="EMBL" id="CP000814">
    <property type="protein sequence ID" value="ABV51869.1"/>
    <property type="molecule type" value="Genomic_DNA"/>
</dbReference>
<dbReference type="RefSeq" id="WP_002865956.1">
    <property type="nucleotide sequence ID" value="NC_009839.1"/>
</dbReference>
<dbReference type="SMR" id="A8FK82"/>
<dbReference type="KEGG" id="cju:C8J_0270"/>
<dbReference type="HOGENOM" id="CLU_045192_1_2_7"/>
<dbReference type="GO" id="GO:0005737">
    <property type="term" value="C:cytoplasm"/>
    <property type="evidence" value="ECO:0007669"/>
    <property type="project" value="UniProtKB-SubCell"/>
</dbReference>
<dbReference type="GO" id="GO:0008254">
    <property type="term" value="F:3'-nucleotidase activity"/>
    <property type="evidence" value="ECO:0007669"/>
    <property type="project" value="TreeGrafter"/>
</dbReference>
<dbReference type="GO" id="GO:0008253">
    <property type="term" value="F:5'-nucleotidase activity"/>
    <property type="evidence" value="ECO:0007669"/>
    <property type="project" value="UniProtKB-UniRule"/>
</dbReference>
<dbReference type="GO" id="GO:0004309">
    <property type="term" value="F:exopolyphosphatase activity"/>
    <property type="evidence" value="ECO:0007669"/>
    <property type="project" value="TreeGrafter"/>
</dbReference>
<dbReference type="GO" id="GO:0046872">
    <property type="term" value="F:metal ion binding"/>
    <property type="evidence" value="ECO:0007669"/>
    <property type="project" value="UniProtKB-UniRule"/>
</dbReference>
<dbReference type="GO" id="GO:0000166">
    <property type="term" value="F:nucleotide binding"/>
    <property type="evidence" value="ECO:0007669"/>
    <property type="project" value="UniProtKB-KW"/>
</dbReference>
<dbReference type="FunFam" id="3.40.1210.10:FF:000001">
    <property type="entry name" value="5'/3'-nucleotidase SurE"/>
    <property type="match status" value="1"/>
</dbReference>
<dbReference type="Gene3D" id="3.40.1210.10">
    <property type="entry name" value="Survival protein SurE-like phosphatase/nucleotidase"/>
    <property type="match status" value="1"/>
</dbReference>
<dbReference type="HAMAP" id="MF_00060">
    <property type="entry name" value="SurE"/>
    <property type="match status" value="1"/>
</dbReference>
<dbReference type="InterPro" id="IPR030048">
    <property type="entry name" value="SurE"/>
</dbReference>
<dbReference type="InterPro" id="IPR002828">
    <property type="entry name" value="SurE-like_Pase/nucleotidase"/>
</dbReference>
<dbReference type="InterPro" id="IPR036523">
    <property type="entry name" value="SurE-like_sf"/>
</dbReference>
<dbReference type="NCBIfam" id="NF001490">
    <property type="entry name" value="PRK00346.1-4"/>
    <property type="match status" value="1"/>
</dbReference>
<dbReference type="NCBIfam" id="NF001494">
    <property type="entry name" value="PRK00346.2-4"/>
    <property type="match status" value="1"/>
</dbReference>
<dbReference type="NCBIfam" id="TIGR00087">
    <property type="entry name" value="surE"/>
    <property type="match status" value="1"/>
</dbReference>
<dbReference type="PANTHER" id="PTHR30457">
    <property type="entry name" value="5'-NUCLEOTIDASE SURE"/>
    <property type="match status" value="1"/>
</dbReference>
<dbReference type="PANTHER" id="PTHR30457:SF12">
    <property type="entry name" value="5'_3'-NUCLEOTIDASE SURE"/>
    <property type="match status" value="1"/>
</dbReference>
<dbReference type="Pfam" id="PF01975">
    <property type="entry name" value="SurE"/>
    <property type="match status" value="1"/>
</dbReference>
<dbReference type="SUPFAM" id="SSF64167">
    <property type="entry name" value="SurE-like"/>
    <property type="match status" value="1"/>
</dbReference>
<gene>
    <name evidence="1" type="primary">surE</name>
    <name type="ordered locus">C8J_0270</name>
</gene>
<comment type="function">
    <text evidence="1">Nucleotidase that shows phosphatase activity on nucleoside 5'-monophosphates.</text>
</comment>
<comment type="catalytic activity">
    <reaction evidence="1">
        <text>a ribonucleoside 5'-phosphate + H2O = a ribonucleoside + phosphate</text>
        <dbReference type="Rhea" id="RHEA:12484"/>
        <dbReference type="ChEBI" id="CHEBI:15377"/>
        <dbReference type="ChEBI" id="CHEBI:18254"/>
        <dbReference type="ChEBI" id="CHEBI:43474"/>
        <dbReference type="ChEBI" id="CHEBI:58043"/>
        <dbReference type="EC" id="3.1.3.5"/>
    </reaction>
</comment>
<comment type="cofactor">
    <cofactor evidence="1">
        <name>a divalent metal cation</name>
        <dbReference type="ChEBI" id="CHEBI:60240"/>
    </cofactor>
    <text evidence="1">Binds 1 divalent metal cation per subunit.</text>
</comment>
<comment type="subcellular location">
    <subcellularLocation>
        <location evidence="1">Cytoplasm</location>
    </subcellularLocation>
</comment>
<comment type="similarity">
    <text evidence="1">Belongs to the SurE nucleotidase family.</text>
</comment>